<dbReference type="EC" id="7.2.2.8"/>
<dbReference type="EMBL" id="U04356">
    <property type="protein sequence ID" value="AAB82020.1"/>
    <property type="molecule type" value="Genomic_DNA"/>
</dbReference>
<dbReference type="EMBL" id="CP000100">
    <property type="protein sequence ID" value="ABB58347.1"/>
    <property type="molecule type" value="Genomic_DNA"/>
</dbReference>
<dbReference type="RefSeq" id="WP_011378404.1">
    <property type="nucleotide sequence ID" value="NZ_JACJTX010000001.1"/>
</dbReference>
<dbReference type="SMR" id="P37385"/>
<dbReference type="STRING" id="1140.Synpcc7942_2317"/>
<dbReference type="PaxDb" id="1140-Synpcc7942_2317"/>
<dbReference type="KEGG" id="syf:Synpcc7942_2317"/>
<dbReference type="eggNOG" id="COG2217">
    <property type="taxonomic scope" value="Bacteria"/>
</dbReference>
<dbReference type="HOGENOM" id="CLU_001771_0_3_3"/>
<dbReference type="OrthoDB" id="438550at2"/>
<dbReference type="BioCyc" id="SYNEL:SYNPCC7942_2317-MONOMER"/>
<dbReference type="Proteomes" id="UP000889800">
    <property type="component" value="Chromosome"/>
</dbReference>
<dbReference type="GO" id="GO:0005886">
    <property type="term" value="C:plasma membrane"/>
    <property type="evidence" value="ECO:0007669"/>
    <property type="project" value="UniProtKB-SubCell"/>
</dbReference>
<dbReference type="GO" id="GO:0005524">
    <property type="term" value="F:ATP binding"/>
    <property type="evidence" value="ECO:0007669"/>
    <property type="project" value="UniProtKB-KW"/>
</dbReference>
<dbReference type="GO" id="GO:0016887">
    <property type="term" value="F:ATP hydrolysis activity"/>
    <property type="evidence" value="ECO:0007669"/>
    <property type="project" value="InterPro"/>
</dbReference>
<dbReference type="GO" id="GO:0005507">
    <property type="term" value="F:copper ion binding"/>
    <property type="evidence" value="ECO:0007669"/>
    <property type="project" value="TreeGrafter"/>
</dbReference>
<dbReference type="GO" id="GO:0043682">
    <property type="term" value="F:P-type divalent copper transporter activity"/>
    <property type="evidence" value="ECO:0007669"/>
    <property type="project" value="TreeGrafter"/>
</dbReference>
<dbReference type="GO" id="GO:0140581">
    <property type="term" value="F:P-type monovalent copper transporter activity"/>
    <property type="evidence" value="ECO:0007669"/>
    <property type="project" value="UniProtKB-EC"/>
</dbReference>
<dbReference type="GO" id="GO:0055070">
    <property type="term" value="P:copper ion homeostasis"/>
    <property type="evidence" value="ECO:0007669"/>
    <property type="project" value="TreeGrafter"/>
</dbReference>
<dbReference type="CDD" id="cd00371">
    <property type="entry name" value="HMA"/>
    <property type="match status" value="1"/>
</dbReference>
<dbReference type="CDD" id="cd02079">
    <property type="entry name" value="P-type_ATPase_HM"/>
    <property type="match status" value="1"/>
</dbReference>
<dbReference type="FunFam" id="3.30.70.100:FF:000001">
    <property type="entry name" value="ATPase copper transporting beta"/>
    <property type="match status" value="1"/>
</dbReference>
<dbReference type="FunFam" id="2.70.150.10:FF:000020">
    <property type="entry name" value="Copper-exporting P-type ATPase A"/>
    <property type="match status" value="1"/>
</dbReference>
<dbReference type="Gene3D" id="3.30.70.100">
    <property type="match status" value="1"/>
</dbReference>
<dbReference type="Gene3D" id="3.40.1110.10">
    <property type="entry name" value="Calcium-transporting ATPase, cytoplasmic domain N"/>
    <property type="match status" value="1"/>
</dbReference>
<dbReference type="Gene3D" id="2.70.150.10">
    <property type="entry name" value="Calcium-transporting ATPase, cytoplasmic transduction domain A"/>
    <property type="match status" value="1"/>
</dbReference>
<dbReference type="Gene3D" id="3.40.50.1000">
    <property type="entry name" value="HAD superfamily/HAD-like"/>
    <property type="match status" value="1"/>
</dbReference>
<dbReference type="InterPro" id="IPR023299">
    <property type="entry name" value="ATPase_P-typ_cyto_dom_N"/>
</dbReference>
<dbReference type="InterPro" id="IPR018303">
    <property type="entry name" value="ATPase_P-typ_P_site"/>
</dbReference>
<dbReference type="InterPro" id="IPR023298">
    <property type="entry name" value="ATPase_P-typ_TM_dom_sf"/>
</dbReference>
<dbReference type="InterPro" id="IPR008250">
    <property type="entry name" value="ATPase_P-typ_transduc_dom_A_sf"/>
</dbReference>
<dbReference type="InterPro" id="IPR036412">
    <property type="entry name" value="HAD-like_sf"/>
</dbReference>
<dbReference type="InterPro" id="IPR023214">
    <property type="entry name" value="HAD_sf"/>
</dbReference>
<dbReference type="InterPro" id="IPR017969">
    <property type="entry name" value="Heavy-metal-associated_CS"/>
</dbReference>
<dbReference type="InterPro" id="IPR006121">
    <property type="entry name" value="HMA_dom"/>
</dbReference>
<dbReference type="InterPro" id="IPR036163">
    <property type="entry name" value="HMA_dom_sf"/>
</dbReference>
<dbReference type="InterPro" id="IPR027256">
    <property type="entry name" value="P-typ_ATPase_IB"/>
</dbReference>
<dbReference type="InterPro" id="IPR001757">
    <property type="entry name" value="P_typ_ATPase"/>
</dbReference>
<dbReference type="NCBIfam" id="TIGR01525">
    <property type="entry name" value="ATPase-IB_hvy"/>
    <property type="match status" value="1"/>
</dbReference>
<dbReference type="NCBIfam" id="TIGR01494">
    <property type="entry name" value="ATPase_P-type"/>
    <property type="match status" value="1"/>
</dbReference>
<dbReference type="PANTHER" id="PTHR43520">
    <property type="entry name" value="ATP7, ISOFORM B"/>
    <property type="match status" value="1"/>
</dbReference>
<dbReference type="PANTHER" id="PTHR43520:SF8">
    <property type="entry name" value="P-TYPE CU(+) TRANSPORTER"/>
    <property type="match status" value="1"/>
</dbReference>
<dbReference type="Pfam" id="PF00122">
    <property type="entry name" value="E1-E2_ATPase"/>
    <property type="match status" value="1"/>
</dbReference>
<dbReference type="Pfam" id="PF00403">
    <property type="entry name" value="HMA"/>
    <property type="match status" value="1"/>
</dbReference>
<dbReference type="Pfam" id="PF00702">
    <property type="entry name" value="Hydrolase"/>
    <property type="match status" value="1"/>
</dbReference>
<dbReference type="PRINTS" id="PR00119">
    <property type="entry name" value="CATATPASE"/>
</dbReference>
<dbReference type="SUPFAM" id="SSF81653">
    <property type="entry name" value="Calcium ATPase, transduction domain A"/>
    <property type="match status" value="1"/>
</dbReference>
<dbReference type="SUPFAM" id="SSF81665">
    <property type="entry name" value="Calcium ATPase, transmembrane domain M"/>
    <property type="match status" value="1"/>
</dbReference>
<dbReference type="SUPFAM" id="SSF56784">
    <property type="entry name" value="HAD-like"/>
    <property type="match status" value="1"/>
</dbReference>
<dbReference type="SUPFAM" id="SSF55008">
    <property type="entry name" value="HMA, heavy metal-associated domain"/>
    <property type="match status" value="1"/>
</dbReference>
<dbReference type="PROSITE" id="PS00154">
    <property type="entry name" value="ATPASE_E1_E2"/>
    <property type="match status" value="1"/>
</dbReference>
<dbReference type="PROSITE" id="PS01047">
    <property type="entry name" value="HMA_1"/>
    <property type="match status" value="1"/>
</dbReference>
<dbReference type="PROSITE" id="PS50846">
    <property type="entry name" value="HMA_2"/>
    <property type="match status" value="1"/>
</dbReference>
<evidence type="ECO:0000250" key="1"/>
<evidence type="ECO:0000255" key="2"/>
<evidence type="ECO:0000255" key="3">
    <source>
        <dbReference type="PROSITE-ProRule" id="PRU00280"/>
    </source>
</evidence>
<evidence type="ECO:0000305" key="4"/>
<gene>
    <name type="primary">synA</name>
    <name type="ordered locus">Synpcc7942_2317</name>
</gene>
<protein>
    <recommendedName>
        <fullName>Probable copper-transporting ATPase SynA</fullName>
        <ecNumber>7.2.2.8</ecNumber>
    </recommendedName>
</protein>
<accession>P37385</accession>
<accession>Q31KS2</accession>
<organism>
    <name type="scientific">Synechococcus elongatus (strain ATCC 33912 / PCC 7942 / FACHB-805)</name>
    <name type="common">Anacystis nidulans R2</name>
    <dbReference type="NCBI Taxonomy" id="1140"/>
    <lineage>
        <taxon>Bacteria</taxon>
        <taxon>Bacillati</taxon>
        <taxon>Cyanobacteriota</taxon>
        <taxon>Cyanophyceae</taxon>
        <taxon>Synechococcales</taxon>
        <taxon>Synechococcaceae</taxon>
        <taxon>Synechococcus</taxon>
    </lineage>
</organism>
<keyword id="KW-0067">ATP-binding</keyword>
<keyword id="KW-1003">Cell membrane</keyword>
<keyword id="KW-0186">Copper</keyword>
<keyword id="KW-0187">Copper transport</keyword>
<keyword id="KW-0406">Ion transport</keyword>
<keyword id="KW-0460">Magnesium</keyword>
<keyword id="KW-0472">Membrane</keyword>
<keyword id="KW-0479">Metal-binding</keyword>
<keyword id="KW-0547">Nucleotide-binding</keyword>
<keyword id="KW-0597">Phosphoprotein</keyword>
<keyword id="KW-1185">Reference proteome</keyword>
<keyword id="KW-1278">Translocase</keyword>
<keyword id="KW-0812">Transmembrane</keyword>
<keyword id="KW-1133">Transmembrane helix</keyword>
<keyword id="KW-0813">Transport</keyword>
<proteinExistence type="inferred from homology"/>
<comment type="function">
    <text>Involved in copper transport.</text>
</comment>
<comment type="catalytic activity">
    <reaction>
        <text>Cu(+)(in) + ATP + H2O = Cu(+)(out) + ADP + phosphate + H(+)</text>
        <dbReference type="Rhea" id="RHEA:25792"/>
        <dbReference type="ChEBI" id="CHEBI:15377"/>
        <dbReference type="ChEBI" id="CHEBI:15378"/>
        <dbReference type="ChEBI" id="CHEBI:30616"/>
        <dbReference type="ChEBI" id="CHEBI:43474"/>
        <dbReference type="ChEBI" id="CHEBI:49552"/>
        <dbReference type="ChEBI" id="CHEBI:456216"/>
        <dbReference type="EC" id="7.2.2.8"/>
    </reaction>
</comment>
<comment type="subcellular location">
    <subcellularLocation>
        <location>Cell membrane</location>
        <topology>Multi-pass membrane protein</topology>
    </subcellularLocation>
</comment>
<comment type="similarity">
    <text evidence="4">Belongs to the cation transport ATPase (P-type) (TC 3.A.3) family. Type IB subfamily.</text>
</comment>
<sequence length="790" mass="83695">MPAAIVHSADPSSTSILVEVEGMKCAGCVAAVERRLQQTAGVEAVSVNLITRLAKVDYDAALIEDPTVLTTEITGLGFRAQLRQDDNPLTLPIAEIPPLQQQRLQLAIAAFLLIVSSWGHLGHWLDHPLPGTDQLWFHALLATWALLGPGRSILQAGWQGLRCGAPNMNSLVLLGTGSAYLASLVALLWPQLGWVCFFDEPVMLLGFILLGRTLEEQARFRSQAALQNLLALQPETTQLLTAPSSIAPQDLLEAPAQIWPVAQLRAGDYVQVLPGDRIPVDGCIVAGQSTLDTAMLTGEPLPQPCQVGDRVCAGTLNLSHRLVIRAEQTGSQTRLAAIVRCVAEAQQRKAPVQRFADAIAGRFVYGVCAIAALTFGFWATLGSRWWPQVLQQPLPGLLIHAPHHGMEMAHPHSHSPLLLALTLAISVLVVACPCALGLATPTAILVATGLAAEQGILVRGGDVLEQLARIKHFVFDKTGTLTQGQFELIEIQPLADVDPDRLLQWAAALEADSRHPLATALQTAAQAANLAPIAASDRQQVPGLGVSGTCDGRSLRLGNPTWVQVATAKLPTGSAAATSIWLADDQQLLACFWLQDQPRPEAAEVVQALRSRGATVQILSGDRQTTAVALAQQLGLESETVVAEVLPEDKAAAIAALQSQGDAVAMIGDGINDAPALATAAVGISLAAGSDIAQDSAGLLLSRDRLDSVLVAWNLSQMGLRTIRQNLTWALGYNVVMLPLAAGAFLPAYGLALTPAIAGACMAVSSLAVVSNSLLLRYWFRRSLNHSVSV</sequence>
<name>ATSY_SYNE7</name>
<feature type="chain" id="PRO_0000046158" description="Probable copper-transporting ATPase SynA">
    <location>
        <begin position="1"/>
        <end position="790"/>
    </location>
</feature>
<feature type="topological domain" description="Cytoplasmic" evidence="2">
    <location>
        <begin position="1"/>
        <end position="105"/>
    </location>
</feature>
<feature type="transmembrane region" description="Helical" evidence="2">
    <location>
        <begin position="106"/>
        <end position="127"/>
    </location>
</feature>
<feature type="topological domain" description="Extracellular" evidence="2">
    <location>
        <begin position="128"/>
        <end position="136"/>
    </location>
</feature>
<feature type="transmembrane region" description="Helical" evidence="2">
    <location>
        <begin position="137"/>
        <end position="156"/>
    </location>
</feature>
<feature type="topological domain" description="Cytoplasmic" evidence="2">
    <location>
        <begin position="157"/>
        <end position="163"/>
    </location>
</feature>
<feature type="transmembrane region" description="Helical" evidence="2">
    <location>
        <begin position="164"/>
        <end position="184"/>
    </location>
</feature>
<feature type="topological domain" description="Extracellular" evidence="2">
    <location>
        <begin position="185"/>
        <end position="198"/>
    </location>
</feature>
<feature type="transmembrane region" description="Helical" evidence="2">
    <location>
        <begin position="199"/>
        <end position="219"/>
    </location>
</feature>
<feature type="topological domain" description="Cytoplasmic" evidence="2">
    <location>
        <begin position="220"/>
        <end position="358"/>
    </location>
</feature>
<feature type="transmembrane region" description="Helical" evidence="2">
    <location>
        <begin position="359"/>
        <end position="381"/>
    </location>
</feature>
<feature type="topological domain" description="Extracellular" evidence="2">
    <location>
        <begin position="382"/>
        <end position="420"/>
    </location>
</feature>
<feature type="transmembrane region" description="Helical" evidence="2">
    <location>
        <begin position="421"/>
        <end position="438"/>
    </location>
</feature>
<feature type="topological domain" description="Cytoplasmic" evidence="2">
    <location>
        <begin position="439"/>
        <end position="723"/>
    </location>
</feature>
<feature type="transmembrane region" description="Helical" evidence="2">
    <location>
        <begin position="724"/>
        <end position="743"/>
    </location>
</feature>
<feature type="topological domain" description="Extracellular" evidence="2">
    <location>
        <begin position="744"/>
        <end position="755"/>
    </location>
</feature>
<feature type="transmembrane region" description="Helical" evidence="2">
    <location>
        <begin position="756"/>
        <end position="774"/>
    </location>
</feature>
<feature type="topological domain" description="Cytoplasmic" evidence="2">
    <location>
        <begin position="775"/>
        <end position="790"/>
    </location>
</feature>
<feature type="domain" description="HMA" evidence="3">
    <location>
        <begin position="14"/>
        <end position="81"/>
    </location>
</feature>
<feature type="active site" description="4-aspartylphosphate intermediate" evidence="1">
    <location>
        <position position="476"/>
    </location>
</feature>
<feature type="binding site" evidence="3">
    <location>
        <position position="25"/>
    </location>
    <ligand>
        <name>Cu(+)</name>
        <dbReference type="ChEBI" id="CHEBI:49552"/>
    </ligand>
</feature>
<feature type="binding site" evidence="3">
    <location>
        <position position="28"/>
    </location>
    <ligand>
        <name>Cu(+)</name>
        <dbReference type="ChEBI" id="CHEBI:49552"/>
    </ligand>
</feature>
<feature type="binding site">
    <location>
        <position position="669"/>
    </location>
    <ligand>
        <name>Mg(2+)</name>
        <dbReference type="ChEBI" id="CHEBI:18420"/>
    </ligand>
</feature>
<feature type="binding site">
    <location>
        <position position="673"/>
    </location>
    <ligand>
        <name>Mg(2+)</name>
        <dbReference type="ChEBI" id="CHEBI:18420"/>
    </ligand>
</feature>
<reference key="1">
    <citation type="journal article" date="1994" name="Proc. Natl. Acad. Sci. U.S.A.">
        <title>P-type ATPase from the cyanobacterium Synechococcus 7942 related to the human Menkes and Wilson disease gene products.</title>
        <authorList>
            <person name="Phung L.T."/>
            <person name="Ajlani G."/>
            <person name="Haselkorn R."/>
        </authorList>
    </citation>
    <scope>NUCLEOTIDE SEQUENCE [GENOMIC DNA]</scope>
</reference>
<reference key="2">
    <citation type="submission" date="2005-08" db="EMBL/GenBank/DDBJ databases">
        <title>Complete sequence of chromosome 1 of Synechococcus elongatus PCC 7942.</title>
        <authorList>
            <consortium name="US DOE Joint Genome Institute"/>
            <person name="Copeland A."/>
            <person name="Lucas S."/>
            <person name="Lapidus A."/>
            <person name="Barry K."/>
            <person name="Detter J.C."/>
            <person name="Glavina T."/>
            <person name="Hammon N."/>
            <person name="Israni S."/>
            <person name="Pitluck S."/>
            <person name="Schmutz J."/>
            <person name="Larimer F."/>
            <person name="Land M."/>
            <person name="Kyrpides N."/>
            <person name="Lykidis A."/>
            <person name="Golden S."/>
            <person name="Richardson P."/>
        </authorList>
    </citation>
    <scope>NUCLEOTIDE SEQUENCE [LARGE SCALE GENOMIC DNA]</scope>
    <source>
        <strain>ATCC 33912 / PCC 7942 / FACHB-805</strain>
    </source>
</reference>